<sequence>MGRMHNPGKGISQSALPYRRSVPTWLKLTSEEVQEQVTRLAKKGLRPSQIGVILRDSHGVAQVRRVTGNKIVRILKAKGMAPEIPEDLYHLIKKAVNIRKHLERNRKDKDSKYRLILVESRIHRLARYYKTKRQLPATWKYESSTASALVS</sequence>
<evidence type="ECO:0000250" key="1"/>
<evidence type="ECO:0000305" key="2"/>
<feature type="initiator methionine" description="Removed" evidence="1">
    <location>
        <position position="1"/>
    </location>
</feature>
<feature type="chain" id="PRO_0000115671" description="Small ribosomal subunit protein uS15">
    <location>
        <begin position="2"/>
        <end position="151"/>
    </location>
</feature>
<protein>
    <recommendedName>
        <fullName evidence="2">Small ribosomal subunit protein uS15</fullName>
    </recommendedName>
    <alternativeName>
        <fullName>40S ribosomal protein S13</fullName>
    </alternativeName>
    <alternativeName>
        <fullName>40S ribosomal protein S15</fullName>
    </alternativeName>
</protein>
<reference key="1">
    <citation type="journal article" date="1992" name="Mol. Biochem. Parasitol.">
        <title>Cloning and characterization of the Wuchereria bancrofti S15 ribosomal protein.</title>
        <authorList>
            <person name="Ellenberger D.L."/>
            <person name="Pieniazek N.J."/>
            <person name="Mian I.S."/>
            <person name="Eberhard M.L."/>
            <person name="Lammie P.J."/>
        </authorList>
    </citation>
    <scope>NUCLEOTIDE SEQUENCE [GENOMIC DNA]</scope>
</reference>
<gene>
    <name type="primary">RPS13</name>
</gene>
<comment type="similarity">
    <text evidence="2">Belongs to the universal ribosomal protein uS15 family.</text>
</comment>
<dbReference type="EMBL" id="M86642">
    <property type="protein sequence ID" value="AAA30343.1"/>
    <property type="molecule type" value="Genomic_DNA"/>
</dbReference>
<dbReference type="SMR" id="P62300"/>
<dbReference type="STRING" id="6293.P62300"/>
<dbReference type="Proteomes" id="UP000093561">
    <property type="component" value="Unassembled WGS sequence"/>
</dbReference>
<dbReference type="GO" id="GO:0022627">
    <property type="term" value="C:cytosolic small ribosomal subunit"/>
    <property type="evidence" value="ECO:0007669"/>
    <property type="project" value="TreeGrafter"/>
</dbReference>
<dbReference type="GO" id="GO:0005730">
    <property type="term" value="C:nucleolus"/>
    <property type="evidence" value="ECO:0007669"/>
    <property type="project" value="TreeGrafter"/>
</dbReference>
<dbReference type="GO" id="GO:0070181">
    <property type="term" value="F:small ribosomal subunit rRNA binding"/>
    <property type="evidence" value="ECO:0007669"/>
    <property type="project" value="TreeGrafter"/>
</dbReference>
<dbReference type="GO" id="GO:0003735">
    <property type="term" value="F:structural constituent of ribosome"/>
    <property type="evidence" value="ECO:0007669"/>
    <property type="project" value="InterPro"/>
</dbReference>
<dbReference type="GO" id="GO:0006412">
    <property type="term" value="P:translation"/>
    <property type="evidence" value="ECO:0007669"/>
    <property type="project" value="InterPro"/>
</dbReference>
<dbReference type="CDD" id="cd00353">
    <property type="entry name" value="Ribosomal_S15p_S13e"/>
    <property type="match status" value="1"/>
</dbReference>
<dbReference type="FunFam" id="1.10.287.10:FF:000003">
    <property type="entry name" value="40S ribosomal protein S13"/>
    <property type="match status" value="1"/>
</dbReference>
<dbReference type="FunFam" id="4.10.860.130:FF:000001">
    <property type="entry name" value="40S ribosomal protein S13"/>
    <property type="match status" value="1"/>
</dbReference>
<dbReference type="Gene3D" id="4.10.860.130">
    <property type="match status" value="1"/>
</dbReference>
<dbReference type="Gene3D" id="1.10.287.10">
    <property type="entry name" value="S15/NS1, RNA-binding"/>
    <property type="match status" value="1"/>
</dbReference>
<dbReference type="HAMAP" id="MF_01343_A">
    <property type="entry name" value="Ribosomal_uS15_A"/>
    <property type="match status" value="1"/>
</dbReference>
<dbReference type="InterPro" id="IPR000589">
    <property type="entry name" value="Ribosomal_uS15"/>
</dbReference>
<dbReference type="InterPro" id="IPR023029">
    <property type="entry name" value="Ribosomal_uS15_arc_euk"/>
</dbReference>
<dbReference type="InterPro" id="IPR012606">
    <property type="entry name" value="Ribosomal_uS15_N"/>
</dbReference>
<dbReference type="InterPro" id="IPR009068">
    <property type="entry name" value="uS15_NS1_RNA-bd_sf"/>
</dbReference>
<dbReference type="NCBIfam" id="NF006331">
    <property type="entry name" value="PRK08561.1"/>
    <property type="match status" value="1"/>
</dbReference>
<dbReference type="PANTHER" id="PTHR11885">
    <property type="entry name" value="RIBOSOMAL PROTEIN S15P/S13E"/>
    <property type="match status" value="1"/>
</dbReference>
<dbReference type="PANTHER" id="PTHR11885:SF6">
    <property type="entry name" value="SMALL RIBOSOMAL SUBUNIT PROTEIN US15"/>
    <property type="match status" value="1"/>
</dbReference>
<dbReference type="Pfam" id="PF08069">
    <property type="entry name" value="Ribosomal_S13_N"/>
    <property type="match status" value="1"/>
</dbReference>
<dbReference type="Pfam" id="PF00312">
    <property type="entry name" value="Ribosomal_S15"/>
    <property type="match status" value="1"/>
</dbReference>
<dbReference type="SMART" id="SM01386">
    <property type="entry name" value="Ribosomal_S13_N"/>
    <property type="match status" value="1"/>
</dbReference>
<dbReference type="SMART" id="SM01387">
    <property type="entry name" value="Ribosomal_S15"/>
    <property type="match status" value="1"/>
</dbReference>
<dbReference type="SUPFAM" id="SSF47060">
    <property type="entry name" value="S15/NS1 RNA-binding domain"/>
    <property type="match status" value="1"/>
</dbReference>
<dbReference type="PROSITE" id="PS00362">
    <property type="entry name" value="RIBOSOMAL_S15"/>
    <property type="match status" value="1"/>
</dbReference>
<proteinExistence type="inferred from homology"/>
<accession>P62300</accession>
<accession>P14015</accession>
<organism>
    <name type="scientific">Wuchereria bancrofti</name>
    <dbReference type="NCBI Taxonomy" id="6293"/>
    <lineage>
        <taxon>Eukaryota</taxon>
        <taxon>Metazoa</taxon>
        <taxon>Ecdysozoa</taxon>
        <taxon>Nematoda</taxon>
        <taxon>Chromadorea</taxon>
        <taxon>Rhabditida</taxon>
        <taxon>Spirurina</taxon>
        <taxon>Spiruromorpha</taxon>
        <taxon>Filarioidea</taxon>
        <taxon>Onchocercidae</taxon>
        <taxon>Wuchereria</taxon>
    </lineage>
</organism>
<name>RS13_WUCBA</name>
<keyword id="KW-0687">Ribonucleoprotein</keyword>
<keyword id="KW-0689">Ribosomal protein</keyword>